<organism>
    <name type="scientific">Salmonella paratyphi C (strain RKS4594)</name>
    <dbReference type="NCBI Taxonomy" id="476213"/>
    <lineage>
        <taxon>Bacteria</taxon>
        <taxon>Pseudomonadati</taxon>
        <taxon>Pseudomonadota</taxon>
        <taxon>Gammaproteobacteria</taxon>
        <taxon>Enterobacterales</taxon>
        <taxon>Enterobacteriaceae</taxon>
        <taxon>Salmonella</taxon>
    </lineage>
</organism>
<feature type="chain" id="PRO_1000164987" description="HTH-type transcriptional regulator HdfR">
    <location>
        <begin position="1"/>
        <end position="278"/>
    </location>
</feature>
<feature type="domain" description="HTH lysR-type" evidence="1">
    <location>
        <begin position="1"/>
        <end position="58"/>
    </location>
</feature>
<feature type="DNA-binding region" description="H-T-H motif" evidence="1">
    <location>
        <begin position="18"/>
        <end position="37"/>
    </location>
</feature>
<reference key="1">
    <citation type="journal article" date="2009" name="PLoS ONE">
        <title>Salmonella paratyphi C: genetic divergence from Salmonella choleraesuis and pathogenic convergence with Salmonella typhi.</title>
        <authorList>
            <person name="Liu W.-Q."/>
            <person name="Feng Y."/>
            <person name="Wang Y."/>
            <person name="Zou Q.-H."/>
            <person name="Chen F."/>
            <person name="Guo J.-T."/>
            <person name="Peng Y.-H."/>
            <person name="Jin Y."/>
            <person name="Li Y.-G."/>
            <person name="Hu S.-N."/>
            <person name="Johnston R.N."/>
            <person name="Liu G.-R."/>
            <person name="Liu S.-L."/>
        </authorList>
    </citation>
    <scope>NUCLEOTIDE SEQUENCE [LARGE SCALE GENOMIC DNA]</scope>
    <source>
        <strain>RKS4594</strain>
    </source>
</reference>
<dbReference type="EMBL" id="CP000857">
    <property type="protein sequence ID" value="ACN48076.1"/>
    <property type="molecule type" value="Genomic_DNA"/>
</dbReference>
<dbReference type="SMR" id="C0Q2U0"/>
<dbReference type="KEGG" id="sei:SPC_4009"/>
<dbReference type="HOGENOM" id="CLU_039613_8_2_6"/>
<dbReference type="Proteomes" id="UP000001599">
    <property type="component" value="Chromosome"/>
</dbReference>
<dbReference type="GO" id="GO:0003677">
    <property type="term" value="F:DNA binding"/>
    <property type="evidence" value="ECO:0007669"/>
    <property type="project" value="UniProtKB-KW"/>
</dbReference>
<dbReference type="GO" id="GO:0003700">
    <property type="term" value="F:DNA-binding transcription factor activity"/>
    <property type="evidence" value="ECO:0007669"/>
    <property type="project" value="UniProtKB-UniRule"/>
</dbReference>
<dbReference type="GO" id="GO:0045892">
    <property type="term" value="P:negative regulation of DNA-templated transcription"/>
    <property type="evidence" value="ECO:0007669"/>
    <property type="project" value="UniProtKB-UniRule"/>
</dbReference>
<dbReference type="FunFam" id="1.10.10.10:FF:000001">
    <property type="entry name" value="LysR family transcriptional regulator"/>
    <property type="match status" value="1"/>
</dbReference>
<dbReference type="Gene3D" id="1.10.10.10">
    <property type="entry name" value="Winged helix-like DNA-binding domain superfamily/Winged helix DNA-binding domain"/>
    <property type="match status" value="1"/>
</dbReference>
<dbReference type="HAMAP" id="MF_01233">
    <property type="entry name" value="HTH_type_HdfR"/>
    <property type="match status" value="1"/>
</dbReference>
<dbReference type="InterPro" id="IPR050176">
    <property type="entry name" value="LTTR"/>
</dbReference>
<dbReference type="InterPro" id="IPR005119">
    <property type="entry name" value="LysR_subst-bd"/>
</dbReference>
<dbReference type="InterPro" id="IPR020890">
    <property type="entry name" value="Tscrpt_reg_HTH_HdfR"/>
</dbReference>
<dbReference type="InterPro" id="IPR000847">
    <property type="entry name" value="Tscrpt_reg_HTH_LysR"/>
</dbReference>
<dbReference type="InterPro" id="IPR036388">
    <property type="entry name" value="WH-like_DNA-bd_sf"/>
</dbReference>
<dbReference type="InterPro" id="IPR036390">
    <property type="entry name" value="WH_DNA-bd_sf"/>
</dbReference>
<dbReference type="NCBIfam" id="NF002946">
    <property type="entry name" value="PRK03601.1"/>
    <property type="match status" value="1"/>
</dbReference>
<dbReference type="PANTHER" id="PTHR30579:SF8">
    <property type="entry name" value="HTH-TYPE TRANSCRIPTIONAL REGULATOR HDFR"/>
    <property type="match status" value="1"/>
</dbReference>
<dbReference type="PANTHER" id="PTHR30579">
    <property type="entry name" value="TRANSCRIPTIONAL REGULATOR"/>
    <property type="match status" value="1"/>
</dbReference>
<dbReference type="Pfam" id="PF00126">
    <property type="entry name" value="HTH_1"/>
    <property type="match status" value="1"/>
</dbReference>
<dbReference type="Pfam" id="PF03466">
    <property type="entry name" value="LysR_substrate"/>
    <property type="match status" value="1"/>
</dbReference>
<dbReference type="PRINTS" id="PR00039">
    <property type="entry name" value="HTHLYSR"/>
</dbReference>
<dbReference type="SUPFAM" id="SSF53850">
    <property type="entry name" value="Periplasmic binding protein-like II"/>
    <property type="match status" value="1"/>
</dbReference>
<dbReference type="SUPFAM" id="SSF46785">
    <property type="entry name" value="Winged helix' DNA-binding domain"/>
    <property type="match status" value="1"/>
</dbReference>
<dbReference type="PROSITE" id="PS50931">
    <property type="entry name" value="HTH_LYSR"/>
    <property type="match status" value="1"/>
</dbReference>
<accession>C0Q2U0</accession>
<name>HDFR_SALPC</name>
<protein>
    <recommendedName>
        <fullName evidence="1">HTH-type transcriptional regulator HdfR</fullName>
    </recommendedName>
    <alternativeName>
        <fullName evidence="1">H-NS-dependent flhDC regulator</fullName>
    </alternativeName>
</protein>
<proteinExistence type="inferred from homology"/>
<evidence type="ECO:0000255" key="1">
    <source>
        <dbReference type="HAMAP-Rule" id="MF_01233"/>
    </source>
</evidence>
<evidence type="ECO:0000305" key="2"/>
<comment type="function">
    <text evidence="1">Negatively regulates the transcription of the flagellar master operon flhDC by binding to the upstream region of the operon.</text>
</comment>
<comment type="similarity">
    <text evidence="2">Belongs to the LysR transcriptional regulatory family.</text>
</comment>
<sequence>MDTELLKTFLEVSRTRHFGRAAEALYLTQSAVSFRIRQLENQLGVNLFTRHRNNIRLTTAGEKLLPYAETLMNTWQAARKEVAHTSRHNEFSIGASASLWECMLNAWLGRLYQLQEPQSGLQFEARIAQRQSLVKQLHERQLDLLITTEAPKMDEFSSQLLGHFTLALYCSSPARKKSELNYLRLEWGPDFQQHETGLIAADEVPVLTTSSAELARQQLSALNGCSWLPVNWANEKGGLHTVADSATLSRPLYAIWLQNSDKYSLICDLLKTDVLDEQ</sequence>
<gene>
    <name evidence="1" type="primary">hdfR</name>
    <name type="ordered locus">SPC_4009</name>
</gene>
<keyword id="KW-0238">DNA-binding</keyword>
<keyword id="KW-0678">Repressor</keyword>
<keyword id="KW-0804">Transcription</keyword>
<keyword id="KW-0805">Transcription regulation</keyword>